<dbReference type="EMBL" id="CP000031">
    <property type="protein sequence ID" value="AAV96725.1"/>
    <property type="molecule type" value="Genomic_DNA"/>
</dbReference>
<dbReference type="RefSeq" id="WP_011049181.1">
    <property type="nucleotide sequence ID" value="NC_003911.12"/>
</dbReference>
<dbReference type="SMR" id="Q5LMR3"/>
<dbReference type="STRING" id="246200.SPO3500"/>
<dbReference type="PaxDb" id="246200-SPO3500"/>
<dbReference type="KEGG" id="sil:SPO3500"/>
<dbReference type="eggNOG" id="COG0049">
    <property type="taxonomic scope" value="Bacteria"/>
</dbReference>
<dbReference type="HOGENOM" id="CLU_072226_1_1_5"/>
<dbReference type="OrthoDB" id="9807653at2"/>
<dbReference type="Proteomes" id="UP000001023">
    <property type="component" value="Chromosome"/>
</dbReference>
<dbReference type="GO" id="GO:0015935">
    <property type="term" value="C:small ribosomal subunit"/>
    <property type="evidence" value="ECO:0007669"/>
    <property type="project" value="InterPro"/>
</dbReference>
<dbReference type="GO" id="GO:0019843">
    <property type="term" value="F:rRNA binding"/>
    <property type="evidence" value="ECO:0007669"/>
    <property type="project" value="UniProtKB-UniRule"/>
</dbReference>
<dbReference type="GO" id="GO:0003735">
    <property type="term" value="F:structural constituent of ribosome"/>
    <property type="evidence" value="ECO:0007669"/>
    <property type="project" value="InterPro"/>
</dbReference>
<dbReference type="GO" id="GO:0000049">
    <property type="term" value="F:tRNA binding"/>
    <property type="evidence" value="ECO:0007669"/>
    <property type="project" value="UniProtKB-UniRule"/>
</dbReference>
<dbReference type="GO" id="GO:0006412">
    <property type="term" value="P:translation"/>
    <property type="evidence" value="ECO:0007669"/>
    <property type="project" value="UniProtKB-UniRule"/>
</dbReference>
<dbReference type="CDD" id="cd14869">
    <property type="entry name" value="uS7_Bacteria"/>
    <property type="match status" value="1"/>
</dbReference>
<dbReference type="FunFam" id="1.10.455.10:FF:000001">
    <property type="entry name" value="30S ribosomal protein S7"/>
    <property type="match status" value="1"/>
</dbReference>
<dbReference type="Gene3D" id="1.10.455.10">
    <property type="entry name" value="Ribosomal protein S7 domain"/>
    <property type="match status" value="1"/>
</dbReference>
<dbReference type="HAMAP" id="MF_00480_B">
    <property type="entry name" value="Ribosomal_uS7_B"/>
    <property type="match status" value="1"/>
</dbReference>
<dbReference type="InterPro" id="IPR000235">
    <property type="entry name" value="Ribosomal_uS7"/>
</dbReference>
<dbReference type="InterPro" id="IPR005717">
    <property type="entry name" value="Ribosomal_uS7_bac/org-type"/>
</dbReference>
<dbReference type="InterPro" id="IPR020606">
    <property type="entry name" value="Ribosomal_uS7_CS"/>
</dbReference>
<dbReference type="InterPro" id="IPR023798">
    <property type="entry name" value="Ribosomal_uS7_dom"/>
</dbReference>
<dbReference type="InterPro" id="IPR036823">
    <property type="entry name" value="Ribosomal_uS7_dom_sf"/>
</dbReference>
<dbReference type="NCBIfam" id="TIGR01029">
    <property type="entry name" value="rpsG_bact"/>
    <property type="match status" value="1"/>
</dbReference>
<dbReference type="PANTHER" id="PTHR11205">
    <property type="entry name" value="RIBOSOMAL PROTEIN S7"/>
    <property type="match status" value="1"/>
</dbReference>
<dbReference type="Pfam" id="PF00177">
    <property type="entry name" value="Ribosomal_S7"/>
    <property type="match status" value="1"/>
</dbReference>
<dbReference type="PIRSF" id="PIRSF002122">
    <property type="entry name" value="RPS7p_RPS7a_RPS5e_RPS7o"/>
    <property type="match status" value="1"/>
</dbReference>
<dbReference type="SUPFAM" id="SSF47973">
    <property type="entry name" value="Ribosomal protein S7"/>
    <property type="match status" value="1"/>
</dbReference>
<dbReference type="PROSITE" id="PS00052">
    <property type="entry name" value="RIBOSOMAL_S7"/>
    <property type="match status" value="1"/>
</dbReference>
<feature type="chain" id="PRO_0000124339" description="Small ribosomal subunit protein uS7">
    <location>
        <begin position="1"/>
        <end position="156"/>
    </location>
</feature>
<organism>
    <name type="scientific">Ruegeria pomeroyi (strain ATCC 700808 / DSM 15171 / DSS-3)</name>
    <name type="common">Silicibacter pomeroyi</name>
    <dbReference type="NCBI Taxonomy" id="246200"/>
    <lineage>
        <taxon>Bacteria</taxon>
        <taxon>Pseudomonadati</taxon>
        <taxon>Pseudomonadota</taxon>
        <taxon>Alphaproteobacteria</taxon>
        <taxon>Rhodobacterales</taxon>
        <taxon>Roseobacteraceae</taxon>
        <taxon>Ruegeria</taxon>
    </lineage>
</organism>
<comment type="function">
    <text evidence="1">One of the primary rRNA binding proteins, it binds directly to 16S rRNA where it nucleates assembly of the head domain of the 30S subunit. Is located at the subunit interface close to the decoding center, probably blocks exit of the E-site tRNA.</text>
</comment>
<comment type="subunit">
    <text evidence="1">Part of the 30S ribosomal subunit. Contacts proteins S9 and S11.</text>
</comment>
<comment type="similarity">
    <text evidence="1">Belongs to the universal ribosomal protein uS7 family.</text>
</comment>
<name>RS7_RUEPO</name>
<reference key="1">
    <citation type="journal article" date="2004" name="Nature">
        <title>Genome sequence of Silicibacter pomeroyi reveals adaptations to the marine environment.</title>
        <authorList>
            <person name="Moran M.A."/>
            <person name="Buchan A."/>
            <person name="Gonzalez J.M."/>
            <person name="Heidelberg J.F."/>
            <person name="Whitman W.B."/>
            <person name="Kiene R.P."/>
            <person name="Henriksen J.R."/>
            <person name="King G.M."/>
            <person name="Belas R."/>
            <person name="Fuqua C."/>
            <person name="Brinkac L.M."/>
            <person name="Lewis M."/>
            <person name="Johri S."/>
            <person name="Weaver B."/>
            <person name="Pai G."/>
            <person name="Eisen J.A."/>
            <person name="Rahe E."/>
            <person name="Sheldon W.M."/>
            <person name="Ye W."/>
            <person name="Miller T.R."/>
            <person name="Carlton J."/>
            <person name="Rasko D.A."/>
            <person name="Paulsen I.T."/>
            <person name="Ren Q."/>
            <person name="Daugherty S.C."/>
            <person name="DeBoy R.T."/>
            <person name="Dodson R.J."/>
            <person name="Durkin A.S."/>
            <person name="Madupu R."/>
            <person name="Nelson W.C."/>
            <person name="Sullivan S.A."/>
            <person name="Rosovitz M.J."/>
            <person name="Haft D.H."/>
            <person name="Selengut J."/>
            <person name="Ward N."/>
        </authorList>
    </citation>
    <scope>NUCLEOTIDE SEQUENCE [LARGE SCALE GENOMIC DNA]</scope>
    <source>
        <strain>ATCC 700808 / DSM 15171 / DSS-3</strain>
    </source>
</reference>
<reference key="2">
    <citation type="journal article" date="2014" name="Stand. Genomic Sci.">
        <title>An updated genome annotation for the model marine bacterium Ruegeria pomeroyi DSS-3.</title>
        <authorList>
            <person name="Rivers A.R."/>
            <person name="Smith C.B."/>
            <person name="Moran M.A."/>
        </authorList>
    </citation>
    <scope>GENOME REANNOTATION</scope>
    <source>
        <strain>ATCC 700808 / DSM 15171 / DSS-3</strain>
    </source>
</reference>
<accession>Q5LMR3</accession>
<keyword id="KW-1185">Reference proteome</keyword>
<keyword id="KW-0687">Ribonucleoprotein</keyword>
<keyword id="KW-0689">Ribosomal protein</keyword>
<keyword id="KW-0694">RNA-binding</keyword>
<keyword id="KW-0699">rRNA-binding</keyword>
<keyword id="KW-0820">tRNA-binding</keyword>
<sequence length="156" mass="18000">MSRRHAAEKREVLPDAKFGDKVLTKFMNNLMIDGKKSVAERIVYNAFDRVENKIKRAPVEVFHEALDNIKPSVEVRSRRVGGATYQVPVEVRPERREALAIRWLIAAARNRNENTMEERLAGELLDAVQSRGTAVKKREDTHKMAEANKAFSHYRW</sequence>
<evidence type="ECO:0000255" key="1">
    <source>
        <dbReference type="HAMAP-Rule" id="MF_00480"/>
    </source>
</evidence>
<evidence type="ECO:0000305" key="2"/>
<protein>
    <recommendedName>
        <fullName evidence="1">Small ribosomal subunit protein uS7</fullName>
    </recommendedName>
    <alternativeName>
        <fullName evidence="2">30S ribosomal protein S7</fullName>
    </alternativeName>
</protein>
<proteinExistence type="inferred from homology"/>
<gene>
    <name evidence="1" type="primary">rpsG</name>
    <name type="ordered locus">SPO3500</name>
</gene>